<comment type="function">
    <text evidence="1">Catalyzes the reversible interconversion of serine and glycine with tetrahydrofolate (THF) serving as the one-carbon carrier. This reaction serves as the major source of one-carbon groups required for the biosynthesis of purines, thymidylate, methionine, and other important biomolecules. Also exhibits THF-independent aldolase activity toward beta-hydroxyamino acids, producing glycine and aldehydes, via a retro-aldol mechanism.</text>
</comment>
<comment type="catalytic activity">
    <reaction evidence="1">
        <text>(6R)-5,10-methylene-5,6,7,8-tetrahydrofolate + glycine + H2O = (6S)-5,6,7,8-tetrahydrofolate + L-serine</text>
        <dbReference type="Rhea" id="RHEA:15481"/>
        <dbReference type="ChEBI" id="CHEBI:15377"/>
        <dbReference type="ChEBI" id="CHEBI:15636"/>
        <dbReference type="ChEBI" id="CHEBI:33384"/>
        <dbReference type="ChEBI" id="CHEBI:57305"/>
        <dbReference type="ChEBI" id="CHEBI:57453"/>
        <dbReference type="EC" id="2.1.2.1"/>
    </reaction>
</comment>
<comment type="cofactor">
    <cofactor evidence="1">
        <name>pyridoxal 5'-phosphate</name>
        <dbReference type="ChEBI" id="CHEBI:597326"/>
    </cofactor>
</comment>
<comment type="pathway">
    <text evidence="1">One-carbon metabolism; tetrahydrofolate interconversion.</text>
</comment>
<comment type="pathway">
    <text evidence="1">Amino-acid biosynthesis; glycine biosynthesis; glycine from L-serine: step 1/1.</text>
</comment>
<comment type="subunit">
    <text evidence="1">Homodimer.</text>
</comment>
<comment type="subcellular location">
    <subcellularLocation>
        <location evidence="1">Cytoplasm</location>
    </subcellularLocation>
</comment>
<comment type="similarity">
    <text evidence="1">Belongs to the SHMT family.</text>
</comment>
<reference key="1">
    <citation type="journal article" date="2009" name="Appl. Environ. Microbiol.">
        <title>Three genomes from the phylum Acidobacteria provide insight into the lifestyles of these microorganisms in soils.</title>
        <authorList>
            <person name="Ward N.L."/>
            <person name="Challacombe J.F."/>
            <person name="Janssen P.H."/>
            <person name="Henrissat B."/>
            <person name="Coutinho P.M."/>
            <person name="Wu M."/>
            <person name="Xie G."/>
            <person name="Haft D.H."/>
            <person name="Sait M."/>
            <person name="Badger J."/>
            <person name="Barabote R.D."/>
            <person name="Bradley B."/>
            <person name="Brettin T.S."/>
            <person name="Brinkac L.M."/>
            <person name="Bruce D."/>
            <person name="Creasy T."/>
            <person name="Daugherty S.C."/>
            <person name="Davidsen T.M."/>
            <person name="DeBoy R.T."/>
            <person name="Detter J.C."/>
            <person name="Dodson R.J."/>
            <person name="Durkin A.S."/>
            <person name="Ganapathy A."/>
            <person name="Gwinn-Giglio M."/>
            <person name="Han C.S."/>
            <person name="Khouri H."/>
            <person name="Kiss H."/>
            <person name="Kothari S.P."/>
            <person name="Madupu R."/>
            <person name="Nelson K.E."/>
            <person name="Nelson W.C."/>
            <person name="Paulsen I."/>
            <person name="Penn K."/>
            <person name="Ren Q."/>
            <person name="Rosovitz M.J."/>
            <person name="Selengut J.D."/>
            <person name="Shrivastava S."/>
            <person name="Sullivan S.A."/>
            <person name="Tapia R."/>
            <person name="Thompson L.S."/>
            <person name="Watkins K.L."/>
            <person name="Yang Q."/>
            <person name="Yu C."/>
            <person name="Zafar N."/>
            <person name="Zhou L."/>
            <person name="Kuske C.R."/>
        </authorList>
    </citation>
    <scope>NUCLEOTIDE SEQUENCE [LARGE SCALE GENOMIC DNA]</scope>
    <source>
        <strain>ATCC 51196 / DSM 11244 / BCRC 80197 / JCM 7670 / NBRC 15755 / NCIMB 13165 / 161</strain>
    </source>
</reference>
<evidence type="ECO:0000255" key="1">
    <source>
        <dbReference type="HAMAP-Rule" id="MF_00051"/>
    </source>
</evidence>
<keyword id="KW-0028">Amino-acid biosynthesis</keyword>
<keyword id="KW-0963">Cytoplasm</keyword>
<keyword id="KW-0554">One-carbon metabolism</keyword>
<keyword id="KW-0663">Pyridoxal phosphate</keyword>
<keyword id="KW-1185">Reference proteome</keyword>
<keyword id="KW-0808">Transferase</keyword>
<proteinExistence type="inferred from homology"/>
<name>GLYA_ACIC5</name>
<gene>
    <name evidence="1" type="primary">glyA</name>
    <name type="ordered locus">ACP_2846</name>
</gene>
<protein>
    <recommendedName>
        <fullName evidence="1">Serine hydroxymethyltransferase</fullName>
        <shortName evidence="1">SHMT</shortName>
        <shortName evidence="1">Serine methylase</shortName>
        <ecNumber evidence="1">2.1.2.1</ecNumber>
    </recommendedName>
</protein>
<accession>C1F3Q7</accession>
<organism>
    <name type="scientific">Acidobacterium capsulatum (strain ATCC 51196 / DSM 11244 / BCRC 80197 / JCM 7670 / NBRC 15755 / NCIMB 13165 / 161)</name>
    <dbReference type="NCBI Taxonomy" id="240015"/>
    <lineage>
        <taxon>Bacteria</taxon>
        <taxon>Pseudomonadati</taxon>
        <taxon>Acidobacteriota</taxon>
        <taxon>Terriglobia</taxon>
        <taxon>Terriglobales</taxon>
        <taxon>Acidobacteriaceae</taxon>
        <taxon>Acidobacterium</taxon>
    </lineage>
</organism>
<feature type="chain" id="PRO_1000195423" description="Serine hydroxymethyltransferase">
    <location>
        <begin position="1"/>
        <end position="427"/>
    </location>
</feature>
<feature type="binding site" evidence="1">
    <location>
        <position position="122"/>
    </location>
    <ligand>
        <name>(6S)-5,6,7,8-tetrahydrofolate</name>
        <dbReference type="ChEBI" id="CHEBI:57453"/>
    </ligand>
</feature>
<feature type="binding site" evidence="1">
    <location>
        <begin position="126"/>
        <end position="128"/>
    </location>
    <ligand>
        <name>(6S)-5,6,7,8-tetrahydrofolate</name>
        <dbReference type="ChEBI" id="CHEBI:57453"/>
    </ligand>
</feature>
<feature type="site" description="Plays an important role in substrate specificity" evidence="1">
    <location>
        <position position="230"/>
    </location>
</feature>
<feature type="modified residue" description="N6-(pyridoxal phosphate)lysine" evidence="1">
    <location>
        <position position="231"/>
    </location>
</feature>
<dbReference type="EC" id="2.1.2.1" evidence="1"/>
<dbReference type="EMBL" id="CP001472">
    <property type="protein sequence ID" value="ACO34406.1"/>
    <property type="molecule type" value="Genomic_DNA"/>
</dbReference>
<dbReference type="RefSeq" id="WP_015897903.1">
    <property type="nucleotide sequence ID" value="NC_012483.1"/>
</dbReference>
<dbReference type="SMR" id="C1F3Q7"/>
<dbReference type="FunCoup" id="C1F3Q7">
    <property type="interactions" value="541"/>
</dbReference>
<dbReference type="STRING" id="240015.ACP_2846"/>
<dbReference type="KEGG" id="aca:ACP_2846"/>
<dbReference type="eggNOG" id="COG0112">
    <property type="taxonomic scope" value="Bacteria"/>
</dbReference>
<dbReference type="HOGENOM" id="CLU_022477_2_1_0"/>
<dbReference type="InParanoid" id="C1F3Q7"/>
<dbReference type="OrthoDB" id="9803846at2"/>
<dbReference type="UniPathway" id="UPA00193"/>
<dbReference type="UniPathway" id="UPA00288">
    <property type="reaction ID" value="UER01023"/>
</dbReference>
<dbReference type="Proteomes" id="UP000002207">
    <property type="component" value="Chromosome"/>
</dbReference>
<dbReference type="GO" id="GO:0005829">
    <property type="term" value="C:cytosol"/>
    <property type="evidence" value="ECO:0007669"/>
    <property type="project" value="TreeGrafter"/>
</dbReference>
<dbReference type="GO" id="GO:0004372">
    <property type="term" value="F:glycine hydroxymethyltransferase activity"/>
    <property type="evidence" value="ECO:0007669"/>
    <property type="project" value="UniProtKB-UniRule"/>
</dbReference>
<dbReference type="GO" id="GO:0030170">
    <property type="term" value="F:pyridoxal phosphate binding"/>
    <property type="evidence" value="ECO:0007669"/>
    <property type="project" value="UniProtKB-UniRule"/>
</dbReference>
<dbReference type="GO" id="GO:0019264">
    <property type="term" value="P:glycine biosynthetic process from serine"/>
    <property type="evidence" value="ECO:0007669"/>
    <property type="project" value="UniProtKB-UniRule"/>
</dbReference>
<dbReference type="GO" id="GO:0035999">
    <property type="term" value="P:tetrahydrofolate interconversion"/>
    <property type="evidence" value="ECO:0007669"/>
    <property type="project" value="UniProtKB-UniRule"/>
</dbReference>
<dbReference type="CDD" id="cd00378">
    <property type="entry name" value="SHMT"/>
    <property type="match status" value="1"/>
</dbReference>
<dbReference type="FunFam" id="3.40.640.10:FF:000001">
    <property type="entry name" value="Serine hydroxymethyltransferase"/>
    <property type="match status" value="1"/>
</dbReference>
<dbReference type="Gene3D" id="3.90.1150.10">
    <property type="entry name" value="Aspartate Aminotransferase, domain 1"/>
    <property type="match status" value="1"/>
</dbReference>
<dbReference type="Gene3D" id="3.40.640.10">
    <property type="entry name" value="Type I PLP-dependent aspartate aminotransferase-like (Major domain)"/>
    <property type="match status" value="1"/>
</dbReference>
<dbReference type="HAMAP" id="MF_00051">
    <property type="entry name" value="SHMT"/>
    <property type="match status" value="1"/>
</dbReference>
<dbReference type="InterPro" id="IPR015424">
    <property type="entry name" value="PyrdxlP-dep_Trfase"/>
</dbReference>
<dbReference type="InterPro" id="IPR015421">
    <property type="entry name" value="PyrdxlP-dep_Trfase_major"/>
</dbReference>
<dbReference type="InterPro" id="IPR015422">
    <property type="entry name" value="PyrdxlP-dep_Trfase_small"/>
</dbReference>
<dbReference type="InterPro" id="IPR001085">
    <property type="entry name" value="Ser_HO-MeTrfase"/>
</dbReference>
<dbReference type="InterPro" id="IPR049943">
    <property type="entry name" value="Ser_HO-MeTrfase-like"/>
</dbReference>
<dbReference type="InterPro" id="IPR019798">
    <property type="entry name" value="Ser_HO-MeTrfase_PLP_BS"/>
</dbReference>
<dbReference type="InterPro" id="IPR039429">
    <property type="entry name" value="SHMT-like_dom"/>
</dbReference>
<dbReference type="NCBIfam" id="NF000586">
    <property type="entry name" value="PRK00011.1"/>
    <property type="match status" value="1"/>
</dbReference>
<dbReference type="PANTHER" id="PTHR11680">
    <property type="entry name" value="SERINE HYDROXYMETHYLTRANSFERASE"/>
    <property type="match status" value="1"/>
</dbReference>
<dbReference type="PANTHER" id="PTHR11680:SF35">
    <property type="entry name" value="SERINE HYDROXYMETHYLTRANSFERASE 1"/>
    <property type="match status" value="1"/>
</dbReference>
<dbReference type="Pfam" id="PF00464">
    <property type="entry name" value="SHMT"/>
    <property type="match status" value="1"/>
</dbReference>
<dbReference type="PIRSF" id="PIRSF000412">
    <property type="entry name" value="SHMT"/>
    <property type="match status" value="1"/>
</dbReference>
<dbReference type="SUPFAM" id="SSF53383">
    <property type="entry name" value="PLP-dependent transferases"/>
    <property type="match status" value="1"/>
</dbReference>
<dbReference type="PROSITE" id="PS00096">
    <property type="entry name" value="SHMT"/>
    <property type="match status" value="1"/>
</dbReference>
<sequence length="427" mass="46117">MSDRMSLSLAQSDPDVAAAIDHEVLRQHEGLEMIASENFVSRAVLEAAGSVFTNKYAEGYPGRRYYGGCEFADVVENLARDRAKQLFGAEHANVQPHSGSQANAAAYMSIIQPGDTILGLDLAHGGHLTHGHKLNFSGKLYRVASYGVRKDTETIDYDELEAIAVREQPKMIIGGGSAYPRIFDFARMRQIADKVGAFLLVDMAHFAGLVAGGAHPSPVPHAHIVTTTTHKTLRGPRSGLILCRQEHAAAVDKSVFPGQQGGPLVHIMAAKAVAFREALQPDFSKYAQQIVDNARALAAALAGHGYRIISGGTDTHLMLIDVFAKGILGSEAEAALGKAGITVNKNAIPYDTNPPLKPSGIRIGTPALTTRGMKEAEMKQIAQWIVSALEHRNNESMLERIHGEVTEMANQFPLYGWLREDAEALAR</sequence>